<accession>P31285</accession>
<sequence>MGCFGYLLLIIGLHQVLATYPIWWSLAVGQQYSSLGTQPIPCGTIPGLVAKQMRFCRNYMEIMPSVAEGVKIGIQECQHQFRGRRWNCTTVNDNLAIFGPVLDKATRESAFVHAIASAGVAFAVTRSCAEGSATICGCDTHHKGPPGEGWKWGGCSEDMDFGSMVSREFADARENRPDARSAMNRHNNEAGRTSILDHRHLKCKCHGLSGSCEVKTCWWSQPDFRVIGDYLKDKYDSASEMVVEKHRESRGWVETLRPKYTFFKPPIERDLIYYESSPNFCEPNPETGSFGTRDRECNVTSHGIDGCDLLCCGRGQNTRTEKRKEKCHCIFHWCCYVSCQECMRVYDVHTCK</sequence>
<reference key="1">
    <citation type="journal article" date="1993" name="Dev. Biol.">
        <title>Overlapping expression of Xwnt-3A and Xwnt-1 in neural tissue of Xenopus laevis embryos.</title>
        <authorList>
            <person name="Wolda S.L."/>
            <person name="Moody C.J."/>
            <person name="Moon R.T."/>
        </authorList>
    </citation>
    <scope>NUCLEOTIDE SEQUENCE [MRNA]</scope>
</reference>
<gene>
    <name type="primary">wnt3a</name>
</gene>
<keyword id="KW-0217">Developmental protein</keyword>
<keyword id="KW-1015">Disulfide bond</keyword>
<keyword id="KW-0272">Extracellular matrix</keyword>
<keyword id="KW-0325">Glycoprotein</keyword>
<keyword id="KW-0449">Lipoprotein</keyword>
<keyword id="KW-1185">Reference proteome</keyword>
<keyword id="KW-0964">Secreted</keyword>
<keyword id="KW-0732">Signal</keyword>
<keyword id="KW-0879">Wnt signaling pathway</keyword>
<comment type="function">
    <text evidence="1 3">Ligand for members of the frizzled family of seven transmembrane receptors. Functions in the canonical Wnt signaling pathway that results in activation of transcription factors of the TCF/LEF family. Required for normal embryonic mesoderm development and formation of caudal somites. Required for normal morphogenesis of the developing neural tube.</text>
</comment>
<comment type="interaction">
    <interactant intactId="EBI-7036309">
        <id>P31285</id>
    </interactant>
    <interactant intactId="EBI-7036323">
        <id>Q6PA07</id>
        <label>ptk7.L</label>
    </interactant>
    <organismsDiffer>false</organismsDiffer>
    <experiments>2</experiments>
</comment>
<comment type="subcellular location">
    <subcellularLocation>
        <location evidence="1">Secreted</location>
        <location evidence="1">Extracellular space</location>
        <location evidence="1">Extracellular matrix</location>
    </subcellularLocation>
    <subcellularLocation>
        <location evidence="1">Secreted</location>
    </subcellularLocation>
</comment>
<comment type="tissue specificity">
    <text>At neurula in anterior neural fold; at tailbud in dorsal midline of midbrain.</text>
</comment>
<comment type="developmental stage">
    <text>Neurula onwards.</text>
</comment>
<comment type="PTM">
    <text evidence="1">Disulfide bonds have critical and distinct roles in secretion and activity. Loss of each conserved cysteine results in high molecular weight oxidized Wnt oligomers, which are formed through inter-Wnt disulfide bonding.</text>
</comment>
<comment type="PTM">
    <text evidence="1 3">Palmitoleoylation is required for efficient binding to frizzled receptors. Depalmitoleoylation leads to Wnt signaling pathway inhibition.</text>
</comment>
<comment type="similarity">
    <text evidence="5">Belongs to the Wnt family.</text>
</comment>
<dbReference type="EMBL" id="L07538">
    <property type="protein sequence ID" value="AAA50009.1"/>
    <property type="molecule type" value="mRNA"/>
</dbReference>
<dbReference type="PIR" id="A48828">
    <property type="entry name" value="A48828"/>
</dbReference>
<dbReference type="RefSeq" id="NP_001079343.1">
    <property type="nucleotide sequence ID" value="NM_001085874.1"/>
</dbReference>
<dbReference type="SMR" id="P31285"/>
<dbReference type="IntAct" id="P31285">
    <property type="interactions" value="3"/>
</dbReference>
<dbReference type="MINT" id="P31285"/>
<dbReference type="GlyCosmos" id="P31285">
    <property type="glycosylation" value="2 sites, No reported glycans"/>
</dbReference>
<dbReference type="GeneID" id="378679"/>
<dbReference type="KEGG" id="xla:378679"/>
<dbReference type="AGR" id="Xenbase:XB-GENE-1217290"/>
<dbReference type="CTD" id="378679"/>
<dbReference type="Xenbase" id="XB-GENE-1217290">
    <property type="gene designation" value="wnt3a.S"/>
</dbReference>
<dbReference type="OrthoDB" id="5945655at2759"/>
<dbReference type="Proteomes" id="UP000186698">
    <property type="component" value="Chromosome 6S"/>
</dbReference>
<dbReference type="Bgee" id="378679">
    <property type="expression patterns" value="Expressed in zone of skin and 1 other cell type or tissue"/>
</dbReference>
<dbReference type="GO" id="GO:0005615">
    <property type="term" value="C:extracellular space"/>
    <property type="evidence" value="ECO:0000250"/>
    <property type="project" value="UniProtKB"/>
</dbReference>
<dbReference type="GO" id="GO:0005125">
    <property type="term" value="F:cytokine activity"/>
    <property type="evidence" value="ECO:0000318"/>
    <property type="project" value="GO_Central"/>
</dbReference>
<dbReference type="GO" id="GO:0005109">
    <property type="term" value="F:frizzled binding"/>
    <property type="evidence" value="ECO:0000318"/>
    <property type="project" value="GO_Central"/>
</dbReference>
<dbReference type="GO" id="GO:0060070">
    <property type="term" value="P:canonical Wnt signaling pathway"/>
    <property type="evidence" value="ECO:0000314"/>
    <property type="project" value="BHF-UCL"/>
</dbReference>
<dbReference type="GO" id="GO:0045165">
    <property type="term" value="P:cell fate commitment"/>
    <property type="evidence" value="ECO:0000318"/>
    <property type="project" value="GO_Central"/>
</dbReference>
<dbReference type="GO" id="GO:0014033">
    <property type="term" value="P:neural crest cell differentiation"/>
    <property type="evidence" value="ECO:0000314"/>
    <property type="project" value="BHF-UCL"/>
</dbReference>
<dbReference type="GO" id="GO:0030182">
    <property type="term" value="P:neuron differentiation"/>
    <property type="evidence" value="ECO:0000318"/>
    <property type="project" value="GO_Central"/>
</dbReference>
<dbReference type="GO" id="GO:0045944">
    <property type="term" value="P:positive regulation of transcription by RNA polymerase II"/>
    <property type="evidence" value="ECO:0000314"/>
    <property type="project" value="BHF-UCL"/>
</dbReference>
<dbReference type="GO" id="GO:0016055">
    <property type="term" value="P:Wnt signaling pathway"/>
    <property type="evidence" value="ECO:0000314"/>
    <property type="project" value="BHF-UCL"/>
</dbReference>
<dbReference type="CDD" id="cd19335">
    <property type="entry name" value="Wnt_Wnt3_Wnt3a"/>
    <property type="match status" value="1"/>
</dbReference>
<dbReference type="FunFam" id="3.30.2460.20:FF:000001">
    <property type="entry name" value="Wnt homolog"/>
    <property type="match status" value="1"/>
</dbReference>
<dbReference type="Gene3D" id="3.30.2460.20">
    <property type="match status" value="1"/>
</dbReference>
<dbReference type="InterPro" id="IPR005817">
    <property type="entry name" value="Wnt"/>
</dbReference>
<dbReference type="InterPro" id="IPR009141">
    <property type="entry name" value="Wnt3"/>
</dbReference>
<dbReference type="InterPro" id="IPR043158">
    <property type="entry name" value="Wnt_C"/>
</dbReference>
<dbReference type="InterPro" id="IPR018161">
    <property type="entry name" value="Wnt_CS"/>
</dbReference>
<dbReference type="PANTHER" id="PTHR12027:SF88">
    <property type="entry name" value="PROTEIN WNT-3A"/>
    <property type="match status" value="1"/>
</dbReference>
<dbReference type="PANTHER" id="PTHR12027">
    <property type="entry name" value="WNT RELATED"/>
    <property type="match status" value="1"/>
</dbReference>
<dbReference type="Pfam" id="PF00110">
    <property type="entry name" value="wnt"/>
    <property type="match status" value="1"/>
</dbReference>
<dbReference type="PRINTS" id="PR01843">
    <property type="entry name" value="WNT3PROTEIN"/>
</dbReference>
<dbReference type="PRINTS" id="PR01349">
    <property type="entry name" value="WNTPROTEIN"/>
</dbReference>
<dbReference type="SMART" id="SM00097">
    <property type="entry name" value="WNT1"/>
    <property type="match status" value="1"/>
</dbReference>
<dbReference type="PROSITE" id="PS00246">
    <property type="entry name" value="WNT1"/>
    <property type="match status" value="1"/>
</dbReference>
<name>WNT3A_XENLA</name>
<feature type="signal peptide" evidence="4">
    <location>
        <begin position="1"/>
        <end position="18"/>
    </location>
</feature>
<feature type="chain" id="PRO_0000041420" description="Protein Wnt-3a">
    <location>
        <begin position="19"/>
        <end position="352"/>
    </location>
</feature>
<feature type="lipid moiety-binding region" description="O-palmitoleoyl serine" evidence="3">
    <location>
        <position position="209"/>
    </location>
</feature>
<feature type="glycosylation site" description="N-linked (GlcNAc...) asparagine" evidence="4">
    <location>
        <position position="87"/>
    </location>
</feature>
<feature type="glycosylation site" description="N-linked (GlcNAc...) asparagine" evidence="4">
    <location>
        <position position="298"/>
    </location>
</feature>
<feature type="disulfide bond" evidence="2">
    <location>
        <begin position="77"/>
        <end position="88"/>
    </location>
</feature>
<feature type="disulfide bond" evidence="2">
    <location>
        <begin position="128"/>
        <end position="136"/>
    </location>
</feature>
<feature type="disulfide bond" evidence="2">
    <location>
        <begin position="138"/>
        <end position="155"/>
    </location>
</feature>
<feature type="disulfide bond" evidence="2">
    <location>
        <begin position="203"/>
        <end position="217"/>
    </location>
</feature>
<feature type="disulfide bond" evidence="2">
    <location>
        <begin position="205"/>
        <end position="212"/>
    </location>
</feature>
<feature type="disulfide bond" evidence="2">
    <location>
        <begin position="297"/>
        <end position="312"/>
    </location>
</feature>
<feature type="disulfide bond" evidence="2">
    <location>
        <begin position="327"/>
        <end position="342"/>
    </location>
</feature>
<feature type="disulfide bond" evidence="2">
    <location>
        <begin position="329"/>
        <end position="339"/>
    </location>
</feature>
<feature type="disulfide bond" evidence="2">
    <location>
        <begin position="334"/>
        <end position="335"/>
    </location>
</feature>
<proteinExistence type="evidence at protein level"/>
<evidence type="ECO:0000250" key="1">
    <source>
        <dbReference type="UniProtKB" id="P27467"/>
    </source>
</evidence>
<evidence type="ECO:0000250" key="2">
    <source>
        <dbReference type="UniProtKB" id="P28026"/>
    </source>
</evidence>
<evidence type="ECO:0000250" key="3">
    <source>
        <dbReference type="UniProtKB" id="P56704"/>
    </source>
</evidence>
<evidence type="ECO:0000255" key="4"/>
<evidence type="ECO:0000305" key="5"/>
<protein>
    <recommendedName>
        <fullName>Protein Wnt-3a</fullName>
        <shortName>XWnt-3a</shortName>
    </recommendedName>
</protein>
<organism>
    <name type="scientific">Xenopus laevis</name>
    <name type="common">African clawed frog</name>
    <dbReference type="NCBI Taxonomy" id="8355"/>
    <lineage>
        <taxon>Eukaryota</taxon>
        <taxon>Metazoa</taxon>
        <taxon>Chordata</taxon>
        <taxon>Craniata</taxon>
        <taxon>Vertebrata</taxon>
        <taxon>Euteleostomi</taxon>
        <taxon>Amphibia</taxon>
        <taxon>Batrachia</taxon>
        <taxon>Anura</taxon>
        <taxon>Pipoidea</taxon>
        <taxon>Pipidae</taxon>
        <taxon>Xenopodinae</taxon>
        <taxon>Xenopus</taxon>
        <taxon>Xenopus</taxon>
    </lineage>
</organism>